<dbReference type="EMBL" id="AB040012">
    <property type="protein sequence ID" value="BAB64863.1"/>
    <property type="molecule type" value="Genomic_DNA"/>
</dbReference>
<dbReference type="GO" id="GO:0009507">
    <property type="term" value="C:chloroplast"/>
    <property type="evidence" value="ECO:0007669"/>
    <property type="project" value="UniProtKB-SubCell"/>
</dbReference>
<dbReference type="GO" id="GO:0003723">
    <property type="term" value="F:RNA binding"/>
    <property type="evidence" value="ECO:0007669"/>
    <property type="project" value="UniProtKB-KW"/>
</dbReference>
<dbReference type="GO" id="GO:0006397">
    <property type="term" value="P:mRNA processing"/>
    <property type="evidence" value="ECO:0007669"/>
    <property type="project" value="UniProtKB-KW"/>
</dbReference>
<dbReference type="GO" id="GO:0008380">
    <property type="term" value="P:RNA splicing"/>
    <property type="evidence" value="ECO:0007669"/>
    <property type="project" value="UniProtKB-UniRule"/>
</dbReference>
<dbReference type="GO" id="GO:0008033">
    <property type="term" value="P:tRNA processing"/>
    <property type="evidence" value="ECO:0007669"/>
    <property type="project" value="UniProtKB-KW"/>
</dbReference>
<dbReference type="HAMAP" id="MF_01390">
    <property type="entry name" value="MatK"/>
    <property type="match status" value="1"/>
</dbReference>
<dbReference type="InterPro" id="IPR024937">
    <property type="entry name" value="Domain_X"/>
</dbReference>
<dbReference type="InterPro" id="IPR002866">
    <property type="entry name" value="Maturase_MatK"/>
</dbReference>
<dbReference type="InterPro" id="IPR024942">
    <property type="entry name" value="Maturase_MatK_N"/>
</dbReference>
<dbReference type="PANTHER" id="PTHR34811">
    <property type="entry name" value="MATURASE K"/>
    <property type="match status" value="1"/>
</dbReference>
<dbReference type="PANTHER" id="PTHR34811:SF1">
    <property type="entry name" value="MATURASE K"/>
    <property type="match status" value="1"/>
</dbReference>
<dbReference type="Pfam" id="PF01348">
    <property type="entry name" value="Intron_maturas2"/>
    <property type="match status" value="1"/>
</dbReference>
<dbReference type="Pfam" id="PF01824">
    <property type="entry name" value="MatK_N"/>
    <property type="match status" value="1"/>
</dbReference>
<name>MATK_NICBI</name>
<geneLocation type="chloroplast"/>
<keyword id="KW-0150">Chloroplast</keyword>
<keyword id="KW-0507">mRNA processing</keyword>
<keyword id="KW-0934">Plastid</keyword>
<keyword id="KW-0694">RNA-binding</keyword>
<keyword id="KW-0819">tRNA processing</keyword>
<reference key="1">
    <citation type="journal article" date="2000" name="Plant Biol.">
        <title>Molecular phylogeny of Nicotiana (Solanaceae) based on the nucleotide sequence of the matK gene.</title>
        <authorList>
            <person name="Aoki S."/>
            <person name="Ito M."/>
        </authorList>
    </citation>
    <scope>NUCLEOTIDE SEQUENCE [GENOMIC DNA]</scope>
</reference>
<accession>Q95DP4</accession>
<protein>
    <recommendedName>
        <fullName evidence="1">Maturase K</fullName>
    </recommendedName>
    <alternativeName>
        <fullName evidence="1">Intron maturase</fullName>
    </alternativeName>
</protein>
<comment type="function">
    <text evidence="1">Usually encoded in the trnK tRNA gene intron. Probably assists in splicing its own and other chloroplast group II introns.</text>
</comment>
<comment type="subcellular location">
    <subcellularLocation>
        <location>Plastid</location>
        <location>Chloroplast</location>
    </subcellularLocation>
</comment>
<comment type="similarity">
    <text evidence="1">Belongs to the intron maturase 2 family. MatK subfamily.</text>
</comment>
<sequence length="509" mass="59933">MEEIQRYLQLDRSQQHNFLYPLIFQEYIYALAHDPGLNRNRSILLENPGSNNKFSFLIVKRLITRMYQQNHFLISTNDFNKNSFLGCNKNLYSQMISEGFAFIVEIPFSLRLISSLSSFEGKKIFKSHNLRSIHSTFPFLEDNFAHLNYVLDILIPYPVHLEILVQTLRYWVKDASSLHLLRFFLHEYWNLNSLITSKKPGYSFSKKNQRFFFFLYNSYVYECESTFVFLRNQSSHLRSTSFGALLERIFFYGKIERLVEVFAKDFQVTLWLFKDPFMHYVRYQGKSILASKGTFLLINKWKFYLVNFWQCHFSLCFHTGRIHINQLSNHSRDFMGYLSSVRLNPSMVRSQMLENSFLINNAIKKFDTLVPIIPLIGSLAKANFCTVLGHPISKPVWSDLSDSDIIARFGRICRNLFHYYSGSSKKKTLYRIKYILRLSCARTLARKHKSTVRTFLKRSGSELLEEFLTSEEQVLSLTFPRASSSLGGVYRSRIWYLDIFCINDLANSQ</sequence>
<gene>
    <name evidence="1" type="primary">matK</name>
</gene>
<evidence type="ECO:0000255" key="1">
    <source>
        <dbReference type="HAMAP-Rule" id="MF_01390"/>
    </source>
</evidence>
<feature type="chain" id="PRO_0000143538" description="Maturase K">
    <location>
        <begin position="1"/>
        <end position="509"/>
    </location>
</feature>
<organism>
    <name type="scientific">Nicotiana bigelovii</name>
    <name type="common">Bigelov's tobacco</name>
    <dbReference type="NCBI Taxonomy" id="4088"/>
    <lineage>
        <taxon>Eukaryota</taxon>
        <taxon>Viridiplantae</taxon>
        <taxon>Streptophyta</taxon>
        <taxon>Embryophyta</taxon>
        <taxon>Tracheophyta</taxon>
        <taxon>Spermatophyta</taxon>
        <taxon>Magnoliopsida</taxon>
        <taxon>eudicotyledons</taxon>
        <taxon>Gunneridae</taxon>
        <taxon>Pentapetalae</taxon>
        <taxon>asterids</taxon>
        <taxon>lamiids</taxon>
        <taxon>Solanales</taxon>
        <taxon>Solanaceae</taxon>
        <taxon>Nicotianoideae</taxon>
        <taxon>Nicotianeae</taxon>
        <taxon>Nicotiana</taxon>
    </lineage>
</organism>
<proteinExistence type="inferred from homology"/>